<feature type="initiator methionine" description="Removed" evidence="1">
    <location>
        <position position="1"/>
    </location>
</feature>
<feature type="chain" id="PRO_0000244611" description="Small nuclear ribonucleoprotein Sm D2">
    <location>
        <begin position="2"/>
        <end position="118"/>
    </location>
</feature>
<feature type="domain" description="Sm" evidence="2">
    <location>
        <begin position="29"/>
        <end position="115"/>
    </location>
</feature>
<feature type="region of interest" description="Disordered" evidence="3">
    <location>
        <begin position="1"/>
        <end position="31"/>
    </location>
</feature>
<feature type="compositionally biased region" description="Basic and acidic residues" evidence="3">
    <location>
        <begin position="7"/>
        <end position="21"/>
    </location>
</feature>
<feature type="modified residue" description="N-acetylserine" evidence="1">
    <location>
        <position position="2"/>
    </location>
</feature>
<feature type="modified residue" description="Phosphoserine" evidence="1">
    <location>
        <position position="9"/>
    </location>
</feature>
<feature type="modified residue" description="Phosphothreonine" evidence="1">
    <location>
        <position position="12"/>
    </location>
</feature>
<feature type="cross-link" description="Glycyl lysine isopeptide (Lys-Gly) (interchain with G-Cter in SUMO2)" evidence="1">
    <location>
        <position position="6"/>
    </location>
</feature>
<feature type="cross-link" description="Glycyl lysine isopeptide (Lys-Gly) (interchain with G-Cter in SUMO2)" evidence="1">
    <location>
        <position position="8"/>
    </location>
</feature>
<gene>
    <name type="primary">SNRPD2</name>
</gene>
<sequence length="118" mass="13527">MSLLNKPKSEMTPEELQKREEEEFNTGPLSVLTQSVKNNTQVLINCRNNKKLLGRVKAFDRHCNMVLENVKEMWTEVPKSGKGKKKSKPVNKDRYISKMFLRGDSVIVVLRNPLIAGK</sequence>
<accession>Q3SZF8</accession>
<dbReference type="EMBL" id="BC102877">
    <property type="protein sequence ID" value="AAI02878.1"/>
    <property type="molecule type" value="mRNA"/>
</dbReference>
<dbReference type="RefSeq" id="NP_001029648.1">
    <property type="nucleotide sequence ID" value="NM_001034476.2"/>
</dbReference>
<dbReference type="SMR" id="Q3SZF8"/>
<dbReference type="FunCoup" id="Q3SZF8">
    <property type="interactions" value="3822"/>
</dbReference>
<dbReference type="STRING" id="9913.ENSBTAP00000016153"/>
<dbReference type="PaxDb" id="9913-ENSBTAP00000016153"/>
<dbReference type="Ensembl" id="ENSBTAT00000016153.4">
    <property type="protein sequence ID" value="ENSBTAP00000016153.3"/>
    <property type="gene ID" value="ENSBTAG00000012177.4"/>
</dbReference>
<dbReference type="GeneID" id="514932"/>
<dbReference type="KEGG" id="bta:514932"/>
<dbReference type="CTD" id="6633"/>
<dbReference type="VEuPathDB" id="HostDB:ENSBTAG00000012177"/>
<dbReference type="VGNC" id="VGNC:35079">
    <property type="gene designation" value="SNRPD2"/>
</dbReference>
<dbReference type="eggNOG" id="KOG3459">
    <property type="taxonomic scope" value="Eukaryota"/>
</dbReference>
<dbReference type="GeneTree" id="ENSGT00390000017608"/>
<dbReference type="HOGENOM" id="CLU_076902_2_1_1"/>
<dbReference type="InParanoid" id="Q3SZF8"/>
<dbReference type="OMA" id="DVKEMWT"/>
<dbReference type="OrthoDB" id="437526at2759"/>
<dbReference type="Reactome" id="R-BTA-191859">
    <property type="pathway name" value="snRNP Assembly"/>
</dbReference>
<dbReference type="Reactome" id="R-BTA-72163">
    <property type="pathway name" value="mRNA Splicing - Major Pathway"/>
</dbReference>
<dbReference type="Reactome" id="R-BTA-72165">
    <property type="pathway name" value="mRNA Splicing - Minor Pathway"/>
</dbReference>
<dbReference type="CD-CODE" id="D7FE2080">
    <property type="entry name" value="Nucleolus"/>
</dbReference>
<dbReference type="Proteomes" id="UP000009136">
    <property type="component" value="Chromosome 18"/>
</dbReference>
<dbReference type="Bgee" id="ENSBTAG00000012177">
    <property type="expression patterns" value="Expressed in semen and 108 other cell types or tissues"/>
</dbReference>
<dbReference type="GO" id="GO:0071013">
    <property type="term" value="C:catalytic step 2 spliceosome"/>
    <property type="evidence" value="ECO:0000318"/>
    <property type="project" value="GO_Central"/>
</dbReference>
<dbReference type="GO" id="GO:0005829">
    <property type="term" value="C:cytosol"/>
    <property type="evidence" value="ECO:0000250"/>
    <property type="project" value="UniProtKB"/>
</dbReference>
<dbReference type="GO" id="GO:0034709">
    <property type="term" value="C:methylosome"/>
    <property type="evidence" value="ECO:0000250"/>
    <property type="project" value="UniProtKB"/>
</dbReference>
<dbReference type="GO" id="GO:0005634">
    <property type="term" value="C:nucleus"/>
    <property type="evidence" value="ECO:0000250"/>
    <property type="project" value="UniProtKB"/>
</dbReference>
<dbReference type="GO" id="GO:0034715">
    <property type="term" value="C:pICln-Sm protein complex"/>
    <property type="evidence" value="ECO:0000250"/>
    <property type="project" value="UniProtKB"/>
</dbReference>
<dbReference type="GO" id="GO:0071011">
    <property type="term" value="C:precatalytic spliceosome"/>
    <property type="evidence" value="ECO:0000318"/>
    <property type="project" value="GO_Central"/>
</dbReference>
<dbReference type="GO" id="GO:0034719">
    <property type="term" value="C:SMN-Sm protein complex"/>
    <property type="evidence" value="ECO:0000250"/>
    <property type="project" value="UniProtKB"/>
</dbReference>
<dbReference type="GO" id="GO:0005685">
    <property type="term" value="C:U1 snRNP"/>
    <property type="evidence" value="ECO:0000250"/>
    <property type="project" value="UniProtKB"/>
</dbReference>
<dbReference type="GO" id="GO:0005689">
    <property type="term" value="C:U12-type spliceosomal complex"/>
    <property type="evidence" value="ECO:0007669"/>
    <property type="project" value="Ensembl"/>
</dbReference>
<dbReference type="GO" id="GO:0005686">
    <property type="term" value="C:U2 snRNP"/>
    <property type="evidence" value="ECO:0000318"/>
    <property type="project" value="GO_Central"/>
</dbReference>
<dbReference type="GO" id="GO:0071007">
    <property type="term" value="C:U2-type catalytic step 2 spliceosome"/>
    <property type="evidence" value="ECO:0000250"/>
    <property type="project" value="UniProtKB"/>
</dbReference>
<dbReference type="GO" id="GO:0071005">
    <property type="term" value="C:U2-type precatalytic spliceosome"/>
    <property type="evidence" value="ECO:0000250"/>
    <property type="project" value="UniProtKB"/>
</dbReference>
<dbReference type="GO" id="GO:0005684">
    <property type="term" value="C:U2-type spliceosomal complex"/>
    <property type="evidence" value="ECO:0000250"/>
    <property type="project" value="UniProtKB"/>
</dbReference>
<dbReference type="GO" id="GO:0005687">
    <property type="term" value="C:U4 snRNP"/>
    <property type="evidence" value="ECO:0000250"/>
    <property type="project" value="UniProtKB"/>
</dbReference>
<dbReference type="GO" id="GO:0046540">
    <property type="term" value="C:U4/U6 x U5 tri-snRNP complex"/>
    <property type="evidence" value="ECO:0000250"/>
    <property type="project" value="UniProtKB"/>
</dbReference>
<dbReference type="GO" id="GO:0005682">
    <property type="term" value="C:U5 snRNP"/>
    <property type="evidence" value="ECO:0000318"/>
    <property type="project" value="GO_Central"/>
</dbReference>
<dbReference type="GO" id="GO:0003723">
    <property type="term" value="F:RNA binding"/>
    <property type="evidence" value="ECO:0007669"/>
    <property type="project" value="InterPro"/>
</dbReference>
<dbReference type="GO" id="GO:0000398">
    <property type="term" value="P:mRNA splicing, via spliceosome"/>
    <property type="evidence" value="ECO:0000250"/>
    <property type="project" value="UniProtKB"/>
</dbReference>
<dbReference type="GO" id="GO:0000387">
    <property type="term" value="P:spliceosomal snRNP assembly"/>
    <property type="evidence" value="ECO:0000250"/>
    <property type="project" value="UniProtKB"/>
</dbReference>
<dbReference type="CDD" id="cd01720">
    <property type="entry name" value="Sm_D2"/>
    <property type="match status" value="1"/>
</dbReference>
<dbReference type="FunFam" id="2.30.30.100:FF:000069">
    <property type="entry name" value="Small nuclear ribonucleoprotein Sm D2"/>
    <property type="match status" value="1"/>
</dbReference>
<dbReference type="Gene3D" id="2.30.30.100">
    <property type="match status" value="1"/>
</dbReference>
<dbReference type="InterPro" id="IPR010920">
    <property type="entry name" value="LSM_dom_sf"/>
</dbReference>
<dbReference type="InterPro" id="IPR047575">
    <property type="entry name" value="Sm"/>
</dbReference>
<dbReference type="InterPro" id="IPR027248">
    <property type="entry name" value="Sm_D2"/>
</dbReference>
<dbReference type="InterPro" id="IPR001163">
    <property type="entry name" value="Sm_dom_euk/arc"/>
</dbReference>
<dbReference type="PANTHER" id="PTHR12777">
    <property type="entry name" value="SMALL NUCLEAR RIBONUCLEOPROTEIN SM D2"/>
    <property type="match status" value="1"/>
</dbReference>
<dbReference type="Pfam" id="PF01423">
    <property type="entry name" value="LSM"/>
    <property type="match status" value="1"/>
</dbReference>
<dbReference type="SMART" id="SM00651">
    <property type="entry name" value="Sm"/>
    <property type="match status" value="1"/>
</dbReference>
<dbReference type="SUPFAM" id="SSF50182">
    <property type="entry name" value="Sm-like ribonucleoproteins"/>
    <property type="match status" value="1"/>
</dbReference>
<dbReference type="PROSITE" id="PS52002">
    <property type="entry name" value="SM"/>
    <property type="match status" value="1"/>
</dbReference>
<comment type="function">
    <text evidence="1">Plays a role in pre-mRNA splicing as a core component of the spliceosomal U1, U2, U4 and U5 small nuclear ribonucleoproteins (snRNPs), the building blocks of the spliceosome. Component of both the pre-catalytic spliceosome B complex and activated spliceosome C complexes. As a component of the minor spliceosome, involved in the splicing of U12-type introns in pre-mRNAs.</text>
</comment>
<comment type="subunit">
    <text evidence="1">Core component of the spliceosomal U1, U2, U4 and U5 small nuclear ribonucleoproteins (snRNPs), the building blocks of the spliceosome. Most spliceosomal snRNPs contain a common set of Sm proteins, SNRPB, SNRPD1, SNRPD2, SNRPD3, SNRPE, SNRPF and SNRPG that assemble in a heptameric protein ring on the Sm site of the small nuclear RNA to form the core snRNP. Component of the U1 snRNP. The U1 snRNP is composed of the U1 snRNA and the 7 core Sm proteins SNRPB, SNRPD1, SNRPD2, SNRPD3, SNRPE, SNRPF and SNRPG, and at least three U1 snRNP-specific proteins SNRNP70/U1-70K, SNRPA/U1-A and SNRPC/U1-C. Component of the U4/U6-U5 tri-snRNP complex composed of the U4, U6 and U5 snRNAs and at least PRPF3, PRPF4, PRPF6, PRPF8, PRPF31, SNRNP200, TXNL4A, SNRNP40, SNRPB, SNRPD1, SNRPD2, SNRPD3, SNRPE, SNRPF, SNRPG, DDX23, CD2BP2, PPIH, SNU13, EFTUD2, SART1 and USP39, plus LSM2, LSM3, LSM4, LSM5, LSM6, LSM7 and LSM8. Component of the minor spliceosome, which splices U12-type introns. Part of the SMN-Sm complex that contains SMN1, GEMIN2/SIP1, DDX20/GEMIN3, GEMIN4, GEMIN5, GEMIN6, GEMIN7, GEMIN8, STRAP/UNRIP and the Sm proteins SNRPB, SNRPD1, SNRPD2, SNRPD3, SNRPE, SNRPF and SNRPG; catalyzes core snRNPs assembly. Forms a 6S pICln-Sm complex composed of CLNS1A/pICln, SNRPD1, SNRPD2, SNRPE, SNRPF and SNRPG; ring-like structure where CLNS1A/pICln mimics additional Sm proteins and which is unable to assemble into the core snRNP. Interacts with SMN1; the interaction is direct. Interacts with GEMIN2; the interaction is direct. Interacts with SNRPD1; the interaction is direct. Interacts with SNRPF; the interaction is direct.</text>
</comment>
<comment type="subcellular location">
    <subcellularLocation>
        <location evidence="1">Cytoplasm</location>
        <location evidence="1">Cytosol</location>
    </subcellularLocation>
    <subcellularLocation>
        <location evidence="1">Nucleus</location>
    </subcellularLocation>
    <text evidence="1">SMN-mediated assembly into core snRNPs occurs in the cytosol before SMN-mediated transport to the nucleus to be included in spliceosomes.</text>
</comment>
<comment type="similarity">
    <text evidence="4">Belongs to the snRNP core protein family.</text>
</comment>
<reference key="1">
    <citation type="submission" date="2005-08" db="EMBL/GenBank/DDBJ databases">
        <authorList>
            <consortium name="NIH - Mammalian Gene Collection (MGC) project"/>
        </authorList>
    </citation>
    <scope>NUCLEOTIDE SEQUENCE [LARGE SCALE MRNA]</scope>
    <source>
        <strain>Crossbred X Angus</strain>
        <tissue>Ileum</tissue>
    </source>
</reference>
<proteinExistence type="inferred from homology"/>
<name>SMD2_BOVIN</name>
<evidence type="ECO:0000250" key="1">
    <source>
        <dbReference type="UniProtKB" id="P62316"/>
    </source>
</evidence>
<evidence type="ECO:0000255" key="2">
    <source>
        <dbReference type="PROSITE-ProRule" id="PRU01346"/>
    </source>
</evidence>
<evidence type="ECO:0000256" key="3">
    <source>
        <dbReference type="SAM" id="MobiDB-lite"/>
    </source>
</evidence>
<evidence type="ECO:0000305" key="4"/>
<protein>
    <recommendedName>
        <fullName>Small nuclear ribonucleoprotein Sm D2</fullName>
        <shortName>Sm-D2</shortName>
    </recommendedName>
    <alternativeName>
        <fullName>snRNP core protein D2</fullName>
    </alternativeName>
</protein>
<keyword id="KW-0007">Acetylation</keyword>
<keyword id="KW-0963">Cytoplasm</keyword>
<keyword id="KW-1017">Isopeptide bond</keyword>
<keyword id="KW-0507">mRNA processing</keyword>
<keyword id="KW-0508">mRNA splicing</keyword>
<keyword id="KW-0539">Nucleus</keyword>
<keyword id="KW-0597">Phosphoprotein</keyword>
<keyword id="KW-1185">Reference proteome</keyword>
<keyword id="KW-0687">Ribonucleoprotein</keyword>
<keyword id="KW-0747">Spliceosome</keyword>
<keyword id="KW-0832">Ubl conjugation</keyword>
<organism>
    <name type="scientific">Bos taurus</name>
    <name type="common">Bovine</name>
    <dbReference type="NCBI Taxonomy" id="9913"/>
    <lineage>
        <taxon>Eukaryota</taxon>
        <taxon>Metazoa</taxon>
        <taxon>Chordata</taxon>
        <taxon>Craniata</taxon>
        <taxon>Vertebrata</taxon>
        <taxon>Euteleostomi</taxon>
        <taxon>Mammalia</taxon>
        <taxon>Eutheria</taxon>
        <taxon>Laurasiatheria</taxon>
        <taxon>Artiodactyla</taxon>
        <taxon>Ruminantia</taxon>
        <taxon>Pecora</taxon>
        <taxon>Bovidae</taxon>
        <taxon>Bovinae</taxon>
        <taxon>Bos</taxon>
    </lineage>
</organism>